<proteinExistence type="inferred from homology"/>
<sequence length="393" mass="45497">MNVPATRKDFMIVNMGPHHPSMHGVLRLILSLDGEDVIDCEPILGYLHRGMEKIAENRTIIQYLPYVTRWDYLATMFTEAITINGPEQLGNIQVPKRASYIRVIMLELSRIASHLLWLGPFMADIGGQTPFFYIFRERELIYDLFEAATGMRMMHNYFRIGGVAADLPHGWLDKCLDFCDYFLTGVAEYQKLITRNPIFLERVEGIGIVSAEEAINWGLSGPMLRASGVRWDLRKVDHYECYDEFDWGVQWQKEGDSLARYLVRIGEMTESVKIIQQALEGIPGGPYENLETRSFDRERNREWNDFEYRFISKKTSPAFELPKQELYVRVEAPKGELGIFLIGDQSSFPWRWKIRPPGFINLQILPQLIKRMKLADIMTILGSIDIIMGEVDR</sequence>
<evidence type="ECO:0000255" key="1">
    <source>
        <dbReference type="HAMAP-Rule" id="MF_01358"/>
    </source>
</evidence>
<keyword id="KW-0150">Chloroplast</keyword>
<keyword id="KW-0472">Membrane</keyword>
<keyword id="KW-0520">NAD</keyword>
<keyword id="KW-0521">NADP</keyword>
<keyword id="KW-0934">Plastid</keyword>
<keyword id="KW-0618">Plastoquinone</keyword>
<keyword id="KW-0874">Quinone</keyword>
<keyword id="KW-0793">Thylakoid</keyword>
<keyword id="KW-1278">Translocase</keyword>
<keyword id="KW-0813">Transport</keyword>
<reference key="1">
    <citation type="submission" date="2005-03" db="EMBL/GenBank/DDBJ databases">
        <title>Complete structure of the chloroplast genome of Populus alba.</title>
        <authorList>
            <person name="Okumura S."/>
            <person name="Yamashita A."/>
            <person name="Kanamoto H."/>
            <person name="Hattori M."/>
            <person name="Takase H."/>
            <person name="Tomizawa K."/>
        </authorList>
    </citation>
    <scope>NUCLEOTIDE SEQUENCE [LARGE SCALE GENOMIC DNA]</scope>
</reference>
<accession>Q14FA2</accession>
<comment type="function">
    <text evidence="1">NDH shuttles electrons from NAD(P)H:plastoquinone, via FMN and iron-sulfur (Fe-S) centers, to quinones in the photosynthetic chain and possibly in a chloroplast respiratory chain. The immediate electron acceptor for the enzyme in this species is believed to be plastoquinone. Couples the redox reaction to proton translocation, and thus conserves the redox energy in a proton gradient.</text>
</comment>
<comment type="catalytic activity">
    <reaction evidence="1">
        <text>a plastoquinone + NADH + (n+1) H(+)(in) = a plastoquinol + NAD(+) + n H(+)(out)</text>
        <dbReference type="Rhea" id="RHEA:42608"/>
        <dbReference type="Rhea" id="RHEA-COMP:9561"/>
        <dbReference type="Rhea" id="RHEA-COMP:9562"/>
        <dbReference type="ChEBI" id="CHEBI:15378"/>
        <dbReference type="ChEBI" id="CHEBI:17757"/>
        <dbReference type="ChEBI" id="CHEBI:57540"/>
        <dbReference type="ChEBI" id="CHEBI:57945"/>
        <dbReference type="ChEBI" id="CHEBI:62192"/>
    </reaction>
</comment>
<comment type="catalytic activity">
    <reaction evidence="1">
        <text>a plastoquinone + NADPH + (n+1) H(+)(in) = a plastoquinol + NADP(+) + n H(+)(out)</text>
        <dbReference type="Rhea" id="RHEA:42612"/>
        <dbReference type="Rhea" id="RHEA-COMP:9561"/>
        <dbReference type="Rhea" id="RHEA-COMP:9562"/>
        <dbReference type="ChEBI" id="CHEBI:15378"/>
        <dbReference type="ChEBI" id="CHEBI:17757"/>
        <dbReference type="ChEBI" id="CHEBI:57783"/>
        <dbReference type="ChEBI" id="CHEBI:58349"/>
        <dbReference type="ChEBI" id="CHEBI:62192"/>
    </reaction>
</comment>
<comment type="subunit">
    <text evidence="1">NDH is composed of at least 16 different subunits, 5 of which are encoded in the nucleus.</text>
</comment>
<comment type="subcellular location">
    <subcellularLocation>
        <location evidence="1">Plastid</location>
        <location evidence="1">Chloroplast thylakoid membrane</location>
        <topology evidence="1">Peripheral membrane protein</topology>
        <orientation evidence="1">Stromal side</orientation>
    </subcellularLocation>
</comment>
<comment type="similarity">
    <text evidence="1">Belongs to the complex I 49 kDa subunit family.</text>
</comment>
<organism>
    <name type="scientific">Populus alba</name>
    <name type="common">White poplar</name>
    <dbReference type="NCBI Taxonomy" id="43335"/>
    <lineage>
        <taxon>Eukaryota</taxon>
        <taxon>Viridiplantae</taxon>
        <taxon>Streptophyta</taxon>
        <taxon>Embryophyta</taxon>
        <taxon>Tracheophyta</taxon>
        <taxon>Spermatophyta</taxon>
        <taxon>Magnoliopsida</taxon>
        <taxon>eudicotyledons</taxon>
        <taxon>Gunneridae</taxon>
        <taxon>Pentapetalae</taxon>
        <taxon>rosids</taxon>
        <taxon>fabids</taxon>
        <taxon>Malpighiales</taxon>
        <taxon>Salicaceae</taxon>
        <taxon>Saliceae</taxon>
        <taxon>Populus</taxon>
    </lineage>
</organism>
<geneLocation type="chloroplast"/>
<feature type="chain" id="PRO_0000358023" description="NAD(P)H-quinone oxidoreductase subunit H, chloroplastic">
    <location>
        <begin position="1"/>
        <end position="393"/>
    </location>
</feature>
<gene>
    <name evidence="1" type="primary">ndhH</name>
</gene>
<name>NDHH_POPAL</name>
<dbReference type="EC" id="7.1.1.-" evidence="1"/>
<dbReference type="EMBL" id="AP008956">
    <property type="protein sequence ID" value="BAE97260.1"/>
    <property type="molecule type" value="Genomic_DNA"/>
</dbReference>
<dbReference type="RefSeq" id="YP_665612.1">
    <property type="nucleotide sequence ID" value="NC_008235.1"/>
</dbReference>
<dbReference type="SMR" id="Q14FA2"/>
<dbReference type="GeneID" id="4178234"/>
<dbReference type="KEGG" id="palz:4178234"/>
<dbReference type="OrthoDB" id="1867at3646"/>
<dbReference type="GO" id="GO:0009535">
    <property type="term" value="C:chloroplast thylakoid membrane"/>
    <property type="evidence" value="ECO:0007669"/>
    <property type="project" value="UniProtKB-SubCell"/>
</dbReference>
<dbReference type="GO" id="GO:0051287">
    <property type="term" value="F:NAD binding"/>
    <property type="evidence" value="ECO:0007669"/>
    <property type="project" value="InterPro"/>
</dbReference>
<dbReference type="GO" id="GO:0016655">
    <property type="term" value="F:oxidoreductase activity, acting on NAD(P)H, quinone or similar compound as acceptor"/>
    <property type="evidence" value="ECO:0007669"/>
    <property type="project" value="UniProtKB-UniRule"/>
</dbReference>
<dbReference type="GO" id="GO:0048038">
    <property type="term" value="F:quinone binding"/>
    <property type="evidence" value="ECO:0007669"/>
    <property type="project" value="UniProtKB-KW"/>
</dbReference>
<dbReference type="GO" id="GO:0019684">
    <property type="term" value="P:photosynthesis, light reaction"/>
    <property type="evidence" value="ECO:0007669"/>
    <property type="project" value="UniProtKB-UniRule"/>
</dbReference>
<dbReference type="FunFam" id="1.10.645.10:FF:000003">
    <property type="entry name" value="NAD(P)H-quinone oxidoreductase subunit H, chloroplastic"/>
    <property type="match status" value="1"/>
</dbReference>
<dbReference type="Gene3D" id="1.10.645.10">
    <property type="entry name" value="Cytochrome-c3 Hydrogenase, chain B"/>
    <property type="match status" value="1"/>
</dbReference>
<dbReference type="HAMAP" id="MF_01358">
    <property type="entry name" value="NDH1_NuoD"/>
    <property type="match status" value="1"/>
</dbReference>
<dbReference type="InterPro" id="IPR001135">
    <property type="entry name" value="NADH_Q_OxRdtase_suD"/>
</dbReference>
<dbReference type="InterPro" id="IPR014029">
    <property type="entry name" value="NADH_UbQ_OxRdtase_49kDa_CS"/>
</dbReference>
<dbReference type="InterPro" id="IPR022885">
    <property type="entry name" value="NDH1_su_D/H"/>
</dbReference>
<dbReference type="InterPro" id="IPR029014">
    <property type="entry name" value="NiFe-Hase_large"/>
</dbReference>
<dbReference type="NCBIfam" id="NF004739">
    <property type="entry name" value="PRK06075.1"/>
    <property type="match status" value="1"/>
</dbReference>
<dbReference type="NCBIfam" id="NF005649">
    <property type="entry name" value="PRK07415.1"/>
    <property type="match status" value="1"/>
</dbReference>
<dbReference type="PANTHER" id="PTHR11993:SF10">
    <property type="entry name" value="NADH DEHYDROGENASE [UBIQUINONE] IRON-SULFUR PROTEIN 2, MITOCHONDRIAL"/>
    <property type="match status" value="1"/>
</dbReference>
<dbReference type="PANTHER" id="PTHR11993">
    <property type="entry name" value="NADH-UBIQUINONE OXIDOREDUCTASE 49 KDA SUBUNIT"/>
    <property type="match status" value="1"/>
</dbReference>
<dbReference type="Pfam" id="PF00346">
    <property type="entry name" value="Complex1_49kDa"/>
    <property type="match status" value="1"/>
</dbReference>
<dbReference type="SUPFAM" id="SSF56762">
    <property type="entry name" value="HydB/Nqo4-like"/>
    <property type="match status" value="1"/>
</dbReference>
<dbReference type="PROSITE" id="PS00535">
    <property type="entry name" value="COMPLEX1_49K"/>
    <property type="match status" value="1"/>
</dbReference>
<protein>
    <recommendedName>
        <fullName evidence="1">NAD(P)H-quinone oxidoreductase subunit H, chloroplastic</fullName>
        <ecNumber evidence="1">7.1.1.-</ecNumber>
    </recommendedName>
    <alternativeName>
        <fullName>NAD(P)H dehydrogenase subunit H</fullName>
    </alternativeName>
    <alternativeName>
        <fullName evidence="1">NADH-plastoquinone oxidoreductase 49 kDa subunit</fullName>
    </alternativeName>
    <alternativeName>
        <fullName evidence="1">NADH-plastoquinone oxidoreductase subunit H</fullName>
    </alternativeName>
</protein>